<gene>
    <name type="primary">mybC</name>
    <name type="ORF">DDB_G0281563</name>
</gene>
<organism>
    <name type="scientific">Dictyostelium discoideum</name>
    <name type="common">Social amoeba</name>
    <dbReference type="NCBI Taxonomy" id="44689"/>
    <lineage>
        <taxon>Eukaryota</taxon>
        <taxon>Amoebozoa</taxon>
        <taxon>Evosea</taxon>
        <taxon>Eumycetozoa</taxon>
        <taxon>Dictyostelia</taxon>
        <taxon>Dictyosteliales</taxon>
        <taxon>Dictyosteliaceae</taxon>
        <taxon>Dictyostelium</taxon>
    </lineage>
</organism>
<dbReference type="EMBL" id="AF098507">
    <property type="protein sequence ID" value="AAG15274.1"/>
    <property type="molecule type" value="mRNA"/>
</dbReference>
<dbReference type="EMBL" id="AAFI02000042">
    <property type="protein sequence ID" value="EAL66543.1"/>
    <property type="molecule type" value="Genomic_DNA"/>
</dbReference>
<dbReference type="EMBL" id="AF136752">
    <property type="protein sequence ID" value="AAQ13568.1"/>
    <property type="molecule type" value="Genomic_DNA"/>
</dbReference>
<dbReference type="RefSeq" id="XP_640559.1">
    <property type="nucleotide sequence ID" value="XM_635467.1"/>
</dbReference>
<dbReference type="SMR" id="Q54TN2"/>
<dbReference type="FunCoup" id="Q54TN2">
    <property type="interactions" value="167"/>
</dbReference>
<dbReference type="STRING" id="44689.Q54TN2"/>
<dbReference type="PaxDb" id="44689-DDB0214816"/>
<dbReference type="EnsemblProtists" id="EAL66543">
    <property type="protein sequence ID" value="EAL66543"/>
    <property type="gene ID" value="DDB_G0281563"/>
</dbReference>
<dbReference type="GeneID" id="8623169"/>
<dbReference type="KEGG" id="ddi:DDB_G0281563"/>
<dbReference type="dictyBase" id="DDB_G0281563">
    <property type="gene designation" value="mybC"/>
</dbReference>
<dbReference type="VEuPathDB" id="AmoebaDB:DDB_G0281563"/>
<dbReference type="eggNOG" id="KOG0048">
    <property type="taxonomic scope" value="Eukaryota"/>
</dbReference>
<dbReference type="HOGENOM" id="CLU_470467_0_0_1"/>
<dbReference type="InParanoid" id="Q54TN2"/>
<dbReference type="OMA" id="VMDVNYK"/>
<dbReference type="PRO" id="PR:Q54TN2"/>
<dbReference type="Proteomes" id="UP000002195">
    <property type="component" value="Chromosome 3"/>
</dbReference>
<dbReference type="GO" id="GO:0005634">
    <property type="term" value="C:nucleus"/>
    <property type="evidence" value="ECO:0000314"/>
    <property type="project" value="dictyBase"/>
</dbReference>
<dbReference type="GO" id="GO:0000981">
    <property type="term" value="F:DNA-binding transcription factor activity, RNA polymerase II-specific"/>
    <property type="evidence" value="ECO:0000318"/>
    <property type="project" value="GO_Central"/>
</dbReference>
<dbReference type="GO" id="GO:0000978">
    <property type="term" value="F:RNA polymerase II cis-regulatory region sequence-specific DNA binding"/>
    <property type="evidence" value="ECO:0000318"/>
    <property type="project" value="GO_Central"/>
</dbReference>
<dbReference type="GO" id="GO:0031154">
    <property type="term" value="P:culmination involved in sorocarp development"/>
    <property type="evidence" value="ECO:0000315"/>
    <property type="project" value="dictyBase"/>
</dbReference>
<dbReference type="GO" id="GO:0010628">
    <property type="term" value="P:positive regulation of gene expression"/>
    <property type="evidence" value="ECO:0000315"/>
    <property type="project" value="dictyBase"/>
</dbReference>
<dbReference type="GO" id="GO:0006355">
    <property type="term" value="P:regulation of DNA-templated transcription"/>
    <property type="evidence" value="ECO:0000250"/>
    <property type="project" value="dictyBase"/>
</dbReference>
<dbReference type="CDD" id="cd00167">
    <property type="entry name" value="SANT"/>
    <property type="match status" value="2"/>
</dbReference>
<dbReference type="FunFam" id="1.10.10.60:FF:000697">
    <property type="entry name" value="Myb transcription factor"/>
    <property type="match status" value="1"/>
</dbReference>
<dbReference type="FunFam" id="1.10.10.60:FF:000563">
    <property type="entry name" value="Putative myb transcription factor"/>
    <property type="match status" value="1"/>
</dbReference>
<dbReference type="Gene3D" id="1.10.10.60">
    <property type="entry name" value="Homeodomain-like"/>
    <property type="match status" value="2"/>
</dbReference>
<dbReference type="InterPro" id="IPR009057">
    <property type="entry name" value="Homeodomain-like_sf"/>
</dbReference>
<dbReference type="InterPro" id="IPR051575">
    <property type="entry name" value="Myb-like_DNA-bd"/>
</dbReference>
<dbReference type="InterPro" id="IPR017930">
    <property type="entry name" value="Myb_dom"/>
</dbReference>
<dbReference type="InterPro" id="IPR001005">
    <property type="entry name" value="SANT/Myb"/>
</dbReference>
<dbReference type="PANTHER" id="PTHR46621">
    <property type="entry name" value="SNRNA-ACTIVATING PROTEIN COMPLEX SUBUNIT 4"/>
    <property type="match status" value="1"/>
</dbReference>
<dbReference type="PANTHER" id="PTHR46621:SF1">
    <property type="entry name" value="SNRNA-ACTIVATING PROTEIN COMPLEX SUBUNIT 4"/>
    <property type="match status" value="1"/>
</dbReference>
<dbReference type="Pfam" id="PF00249">
    <property type="entry name" value="Myb_DNA-binding"/>
    <property type="match status" value="2"/>
</dbReference>
<dbReference type="SMART" id="SM00717">
    <property type="entry name" value="SANT"/>
    <property type="match status" value="3"/>
</dbReference>
<dbReference type="SUPFAM" id="SSF46689">
    <property type="entry name" value="Homeodomain-like"/>
    <property type="match status" value="1"/>
</dbReference>
<dbReference type="PROSITE" id="PS51294">
    <property type="entry name" value="HTH_MYB"/>
    <property type="match status" value="2"/>
</dbReference>
<dbReference type="PROSITE" id="PS50090">
    <property type="entry name" value="MYB_LIKE"/>
    <property type="match status" value="1"/>
</dbReference>
<keyword id="KW-0010">Activator</keyword>
<keyword id="KW-0217">Developmental protein</keyword>
<keyword id="KW-0238">DNA-binding</keyword>
<keyword id="KW-0539">Nucleus</keyword>
<keyword id="KW-1185">Reference proteome</keyword>
<keyword id="KW-0677">Repeat</keyword>
<keyword id="KW-0804">Transcription</keyword>
<keyword id="KW-0805">Transcription regulation</keyword>
<name>MYBC_DICDI</name>
<sequence length="580" mass="65993">MTMINPLSYPVPSQYSYTYNNNNNNSNNSSNNNSNNNSNNNNNNNNNCGVPNVSYGSNLNQQSMAQDLRVPEQYSISSPSPKKRPFNSTMTTSPPTPTLLSNSPYIHGSHIVPQYSPQLQNVYNTPHQSSHSIHQPPQQTPNIFNNNNNNNNNNEKSNNQNFGNTLFNSITNNSSNSSNSLIQQNNLTNNGSSSSSSSSSSTNFNQNNNFINSSNDSIYNSNICSFYGNTSSSSSSSLNGIESPPSVELMDDDIEDQLREYISPVIWGMMDNYAREQFYNAIVEFINEEISFRSLLLELRVIAVMDVNYKSIFQFLVDLFLSIEPNQKMVNYLRDNGVEENEFNIDLKSLELSSDNDSNQKKKRERIRKSVSRGLRNPPNKWAKEESQKLIQLVHEHGDKQWKKIAHQIGGGKTGAQCAQHWKRVLCPAIRKGSWDEDEESKLFNLVEKHGQSWKNVASEIRTRTDIQCRYQYFKSCMSREVQWSSREDEILQKKVSENNQQDGTININNTRDISWMDVSKAMARGRQTKIPRTALECKTRYFQLNFGGAPIQIVVPHNDDHLNNPHSPLNSLLQDQNCY</sequence>
<protein>
    <recommendedName>
        <fullName>Myb-like protein C</fullName>
    </recommendedName>
</protein>
<accession>Q54TN2</accession>
<accession>Q2V061</accession>
<accession>Q9GUB3</accession>
<proteinExistence type="evidence at protein level"/>
<evidence type="ECO:0000255" key="1">
    <source>
        <dbReference type="PROSITE-ProRule" id="PRU00133"/>
    </source>
</evidence>
<evidence type="ECO:0000255" key="2">
    <source>
        <dbReference type="PROSITE-ProRule" id="PRU00625"/>
    </source>
</evidence>
<evidence type="ECO:0000256" key="3">
    <source>
        <dbReference type="SAM" id="MobiDB-lite"/>
    </source>
</evidence>
<evidence type="ECO:0000269" key="4">
    <source>
    </source>
</evidence>
<evidence type="ECO:0000305" key="5"/>
<reference key="1">
    <citation type="journal article" date="1999" name="Development">
        <title>A myb-related protein required for culmination in Dictyostelium.</title>
        <authorList>
            <person name="Guo K."/>
            <person name="Anjard C."/>
            <person name="Harwood A."/>
            <person name="Kim H.-J."/>
            <person name="Newell P.C."/>
            <person name="Gross J.D."/>
        </authorList>
    </citation>
    <scope>NUCLEOTIDE SEQUENCE [MRNA]</scope>
    <scope>FUNCTION</scope>
    <scope>SUBCELLULAR LOCATION</scope>
    <scope>DEVELOPMENTAL STAGE</scope>
    <scope>MUTAGENESIS OF SER-434</scope>
</reference>
<reference key="2">
    <citation type="journal article" date="2005" name="Nature">
        <title>The genome of the social amoeba Dictyostelium discoideum.</title>
        <authorList>
            <person name="Eichinger L."/>
            <person name="Pachebat J.A."/>
            <person name="Gloeckner G."/>
            <person name="Rajandream M.A."/>
            <person name="Sucgang R."/>
            <person name="Berriman M."/>
            <person name="Song J."/>
            <person name="Olsen R."/>
            <person name="Szafranski K."/>
            <person name="Xu Q."/>
            <person name="Tunggal B."/>
            <person name="Kummerfeld S."/>
            <person name="Madera M."/>
            <person name="Konfortov B.A."/>
            <person name="Rivero F."/>
            <person name="Bankier A.T."/>
            <person name="Lehmann R."/>
            <person name="Hamlin N."/>
            <person name="Davies R."/>
            <person name="Gaudet P."/>
            <person name="Fey P."/>
            <person name="Pilcher K."/>
            <person name="Chen G."/>
            <person name="Saunders D."/>
            <person name="Sodergren E.J."/>
            <person name="Davis P."/>
            <person name="Kerhornou A."/>
            <person name="Nie X."/>
            <person name="Hall N."/>
            <person name="Anjard C."/>
            <person name="Hemphill L."/>
            <person name="Bason N."/>
            <person name="Farbrother P."/>
            <person name="Desany B."/>
            <person name="Just E."/>
            <person name="Morio T."/>
            <person name="Rost R."/>
            <person name="Churcher C.M."/>
            <person name="Cooper J."/>
            <person name="Haydock S."/>
            <person name="van Driessche N."/>
            <person name="Cronin A."/>
            <person name="Goodhead I."/>
            <person name="Muzny D.M."/>
            <person name="Mourier T."/>
            <person name="Pain A."/>
            <person name="Lu M."/>
            <person name="Harper D."/>
            <person name="Lindsay R."/>
            <person name="Hauser H."/>
            <person name="James K.D."/>
            <person name="Quiles M."/>
            <person name="Madan Babu M."/>
            <person name="Saito T."/>
            <person name="Buchrieser C."/>
            <person name="Wardroper A."/>
            <person name="Felder M."/>
            <person name="Thangavelu M."/>
            <person name="Johnson D."/>
            <person name="Knights A."/>
            <person name="Loulseged H."/>
            <person name="Mungall K.L."/>
            <person name="Oliver K."/>
            <person name="Price C."/>
            <person name="Quail M.A."/>
            <person name="Urushihara H."/>
            <person name="Hernandez J."/>
            <person name="Rabbinowitsch E."/>
            <person name="Steffen D."/>
            <person name="Sanders M."/>
            <person name="Ma J."/>
            <person name="Kohara Y."/>
            <person name="Sharp S."/>
            <person name="Simmonds M.N."/>
            <person name="Spiegler S."/>
            <person name="Tivey A."/>
            <person name="Sugano S."/>
            <person name="White B."/>
            <person name="Walker D."/>
            <person name="Woodward J.R."/>
            <person name="Winckler T."/>
            <person name="Tanaka Y."/>
            <person name="Shaulsky G."/>
            <person name="Schleicher M."/>
            <person name="Weinstock G.M."/>
            <person name="Rosenthal A."/>
            <person name="Cox E.C."/>
            <person name="Chisholm R.L."/>
            <person name="Gibbs R.A."/>
            <person name="Loomis W.F."/>
            <person name="Platzer M."/>
            <person name="Kay R.R."/>
            <person name="Williams J.G."/>
            <person name="Dear P.H."/>
            <person name="Noegel A.A."/>
            <person name="Barrell B.G."/>
            <person name="Kuspa A."/>
        </authorList>
    </citation>
    <scope>NUCLEOTIDE SEQUENCE [LARGE SCALE GENOMIC DNA]</scope>
    <source>
        <strain>AX4</strain>
    </source>
</reference>
<reference key="3">
    <citation type="submission" date="1999-03" db="EMBL/GenBank/DDBJ databases">
        <title>Promoter analysis of a myb gene in Dictyostelium.</title>
        <authorList>
            <person name="Guo K."/>
            <person name="Newell P.C."/>
        </authorList>
    </citation>
    <scope>NUCLEOTIDE SEQUENCE [GENOMIC DNA] OF 1-26</scope>
</reference>
<comment type="function">
    <text evidence="4">Transcription activator required for the culmination, at the time of the fruiting body formation. Regulates genes involved in the cell differentiation within the fruiting body.</text>
</comment>
<comment type="subcellular location">
    <subcellularLocation>
        <location evidence="2 4">Nucleus</location>
    </subcellularLocation>
</comment>
<comment type="developmental stage">
    <text evidence="4">Expressed during the slug stage in prestalk cells leading later to the fruiting body.</text>
</comment>
<feature type="chain" id="PRO_0000327826" description="Myb-like protein C">
    <location>
        <begin position="1"/>
        <end position="580"/>
    </location>
</feature>
<feature type="domain" description="HTH myb-type 1" evidence="2">
    <location>
        <begin position="368"/>
        <end position="430"/>
    </location>
</feature>
<feature type="domain" description="HTH myb-type 2" evidence="2">
    <location>
        <begin position="431"/>
        <end position="482"/>
    </location>
</feature>
<feature type="domain" description="Myb-like" evidence="1">
    <location>
        <begin position="484"/>
        <end position="546"/>
    </location>
</feature>
<feature type="DNA-binding region" description="H-T-H motif" evidence="2">
    <location>
        <begin position="402"/>
        <end position="426"/>
    </location>
</feature>
<feature type="DNA-binding region" description="H-T-H motif" evidence="2">
    <location>
        <begin position="454"/>
        <end position="478"/>
    </location>
</feature>
<feature type="region of interest" description="Disordered" evidence="3">
    <location>
        <begin position="1"/>
        <end position="58"/>
    </location>
</feature>
<feature type="region of interest" description="Disordered" evidence="3">
    <location>
        <begin position="73"/>
        <end position="101"/>
    </location>
</feature>
<feature type="region of interest" description="Disordered" evidence="3">
    <location>
        <begin position="121"/>
        <end position="203"/>
    </location>
</feature>
<feature type="region of interest" description="Disordered" evidence="3">
    <location>
        <begin position="354"/>
        <end position="380"/>
    </location>
</feature>
<feature type="compositionally biased region" description="Low complexity" evidence="3">
    <location>
        <begin position="20"/>
        <end position="47"/>
    </location>
</feature>
<feature type="compositionally biased region" description="Low complexity" evidence="3">
    <location>
        <begin position="87"/>
        <end position="101"/>
    </location>
</feature>
<feature type="compositionally biased region" description="Low complexity" evidence="3">
    <location>
        <begin position="126"/>
        <end position="203"/>
    </location>
</feature>
<feature type="compositionally biased region" description="Basic residues" evidence="3">
    <location>
        <begin position="361"/>
        <end position="371"/>
    </location>
</feature>
<feature type="mutagenesis site" description="No effect." evidence="4">
    <original>S</original>
    <variation>A</variation>
    <location>
        <position position="434"/>
    </location>
</feature>
<feature type="mutagenesis site" description="Loss of transcription activation activity." evidence="4">
    <original>S</original>
    <variation>D</variation>
    <location>
        <position position="434"/>
    </location>
</feature>
<feature type="sequence conflict" description="In Ref. 1; AAG15274." evidence="5" ref="1">
    <original>S</original>
    <variation>I</variation>
    <location>
        <position position="29"/>
    </location>
</feature>